<evidence type="ECO:0000255" key="1">
    <source>
        <dbReference type="PROSITE-ProRule" id="PRU00798"/>
    </source>
</evidence>
<evidence type="ECO:0007829" key="2">
    <source>
        <dbReference type="PDB" id="2NU1"/>
    </source>
</evidence>
<protein>
    <recommendedName>
        <fullName>Ovomucoid</fullName>
    </recommendedName>
</protein>
<organism>
    <name type="scientific">Meleagris ocellata</name>
    <name type="common">Ocellated turkey</name>
    <name type="synonym">Agriocharis ocellata</name>
    <dbReference type="NCBI Taxonomy" id="9101"/>
    <lineage>
        <taxon>Eukaryota</taxon>
        <taxon>Metazoa</taxon>
        <taxon>Chordata</taxon>
        <taxon>Craniata</taxon>
        <taxon>Vertebrata</taxon>
        <taxon>Euteleostomi</taxon>
        <taxon>Archelosauria</taxon>
        <taxon>Archosauria</taxon>
        <taxon>Dinosauria</taxon>
        <taxon>Saurischia</taxon>
        <taxon>Theropoda</taxon>
        <taxon>Coelurosauria</taxon>
        <taxon>Aves</taxon>
        <taxon>Neognathae</taxon>
        <taxon>Galloanserae</taxon>
        <taxon>Galliformes</taxon>
        <taxon>Phasianidae</taxon>
        <taxon>Meleagridinae</taxon>
        <taxon>Meleagris</taxon>
    </lineage>
</organism>
<keyword id="KW-0002">3D-structure</keyword>
<keyword id="KW-0903">Direct protein sequencing</keyword>
<keyword id="KW-1015">Disulfide bond</keyword>
<keyword id="KW-0325">Glycoprotein</keyword>
<keyword id="KW-0646">Protease inhibitor</keyword>
<keyword id="KW-0677">Repeat</keyword>
<keyword id="KW-0964">Secreted</keyword>
<keyword id="KW-0722">Serine protease inhibitor</keyword>
<sequence length="56" mass="6021">LAAVSVDCSEYPKPACTLEYRPLCGSDNKTYGNKCNFCNAVVESNGTLTLSHFGKC</sequence>
<feature type="chain" id="PRO_0000073049" description="Ovomucoid">
    <location>
        <begin position="1" status="less than"/>
        <end position="56" status="greater than"/>
    </location>
</feature>
<feature type="domain" description="Kazal-like" evidence="1">
    <location>
        <begin position="6"/>
        <end position="56"/>
    </location>
</feature>
<feature type="site" description="Reactive bond 3">
    <location>
        <begin position="18"/>
        <end position="19"/>
    </location>
</feature>
<feature type="glycosylation site" description="N-linked (GlcNAc...) asparagine">
    <location>
        <position position="45"/>
    </location>
</feature>
<feature type="disulfide bond">
    <location>
        <begin position="8"/>
        <end position="38"/>
    </location>
</feature>
<feature type="disulfide bond">
    <location>
        <begin position="16"/>
        <end position="35"/>
    </location>
</feature>
<feature type="disulfide bond">
    <location>
        <begin position="24"/>
        <end position="56"/>
    </location>
</feature>
<feature type="non-terminal residue">
    <location>
        <position position="1"/>
    </location>
</feature>
<feature type="non-terminal residue">
    <location>
        <position position="56"/>
    </location>
</feature>
<feature type="strand" evidence="2">
    <location>
        <begin position="23"/>
        <end position="25"/>
    </location>
</feature>
<feature type="strand" evidence="2">
    <location>
        <begin position="30"/>
        <end position="33"/>
    </location>
</feature>
<feature type="helix" evidence="2">
    <location>
        <begin position="34"/>
        <end position="43"/>
    </location>
</feature>
<feature type="turn" evidence="2">
    <location>
        <begin position="44"/>
        <end position="46"/>
    </location>
</feature>
<feature type="strand" evidence="2">
    <location>
        <begin position="50"/>
        <end position="54"/>
    </location>
</feature>
<proteinExistence type="evidence at protein level"/>
<comment type="subcellular location">
    <subcellularLocation>
        <location>Secreted</location>
    </subcellularLocation>
</comment>
<comment type="domain">
    <text>Avian ovomucoid consists of three homologous, tandem Kazal family inhibitory domains.</text>
</comment>
<reference key="1">
    <citation type="journal article" date="1987" name="Biochemistry">
        <title>Ovomucoid third domains from 100 avian species: isolation, sequences, and hypervariability of enzyme-inhibitor contact residues.</title>
        <authorList>
            <person name="Laskowski M. Jr."/>
            <person name="Kato I."/>
            <person name="Ardelt W."/>
            <person name="Cook J."/>
            <person name="Denton A."/>
            <person name="Empie M.W."/>
            <person name="Kohr W.J."/>
            <person name="Park S.J."/>
            <person name="Parks K."/>
            <person name="Schatzley B.L."/>
            <person name="Schoenberger O.L."/>
            <person name="Tashiro M."/>
            <person name="Vichot G."/>
            <person name="Whatley H.E."/>
            <person name="Wieczorek A."/>
            <person name="Wieczorek M."/>
        </authorList>
    </citation>
    <scope>PROTEIN SEQUENCE</scope>
</reference>
<accession>P68436</accession>
<accession>P01004</accession>
<name>IOVO_MELOE</name>
<dbReference type="PIR" id="C31444">
    <property type="entry name" value="C31444"/>
</dbReference>
<dbReference type="PDB" id="2NU0">
    <property type="method" value="X-ray"/>
    <property type="resolution" value="1.95 A"/>
    <property type="chains" value="I=6-56"/>
</dbReference>
<dbReference type="PDB" id="2NU1">
    <property type="method" value="X-ray"/>
    <property type="resolution" value="1.80 A"/>
    <property type="chains" value="I=6-56"/>
</dbReference>
<dbReference type="PDB" id="2NU2">
    <property type="method" value="X-ray"/>
    <property type="resolution" value="1.65 A"/>
    <property type="chains" value="I=6-56"/>
</dbReference>
<dbReference type="PDB" id="2NU3">
    <property type="method" value="X-ray"/>
    <property type="resolution" value="1.80 A"/>
    <property type="chains" value="I=6-56"/>
</dbReference>
<dbReference type="PDB" id="2NU4">
    <property type="method" value="X-ray"/>
    <property type="resolution" value="1.75 A"/>
    <property type="chains" value="I=6-56"/>
</dbReference>
<dbReference type="PDBsum" id="2NU0"/>
<dbReference type="PDBsum" id="2NU1"/>
<dbReference type="PDBsum" id="2NU2"/>
<dbReference type="PDBsum" id="2NU3"/>
<dbReference type="PDBsum" id="2NU4"/>
<dbReference type="SMR" id="P68436"/>
<dbReference type="EvolutionaryTrace" id="P68436"/>
<dbReference type="GO" id="GO:0005576">
    <property type="term" value="C:extracellular region"/>
    <property type="evidence" value="ECO:0007669"/>
    <property type="project" value="UniProtKB-SubCell"/>
</dbReference>
<dbReference type="GO" id="GO:0004867">
    <property type="term" value="F:serine-type endopeptidase inhibitor activity"/>
    <property type="evidence" value="ECO:0007669"/>
    <property type="project" value="UniProtKB-KW"/>
</dbReference>
<dbReference type="CDD" id="cd00104">
    <property type="entry name" value="KAZAL_FS"/>
    <property type="match status" value="1"/>
</dbReference>
<dbReference type="FunFam" id="3.30.60.30:FF:000037">
    <property type="entry name" value="Ovomucoid"/>
    <property type="match status" value="1"/>
</dbReference>
<dbReference type="Gene3D" id="3.30.60.30">
    <property type="match status" value="1"/>
</dbReference>
<dbReference type="InterPro" id="IPR051597">
    <property type="entry name" value="Bifunctional_prot_inhibitor"/>
</dbReference>
<dbReference type="InterPro" id="IPR002350">
    <property type="entry name" value="Kazal_dom"/>
</dbReference>
<dbReference type="InterPro" id="IPR036058">
    <property type="entry name" value="Kazal_dom_sf"/>
</dbReference>
<dbReference type="InterPro" id="IPR001239">
    <property type="entry name" value="Prot_inh_Kazal-m"/>
</dbReference>
<dbReference type="PANTHER" id="PTHR47729:SF1">
    <property type="entry name" value="OVOMUCOID-LIKE-RELATED"/>
    <property type="match status" value="1"/>
</dbReference>
<dbReference type="PANTHER" id="PTHR47729">
    <property type="entry name" value="SERINE PEPTIDASE INHIBITOR, KAZAL TYPE 2, TANDEM DUPLICATE 1-RELATED"/>
    <property type="match status" value="1"/>
</dbReference>
<dbReference type="Pfam" id="PF00050">
    <property type="entry name" value="Kazal_1"/>
    <property type="match status" value="1"/>
</dbReference>
<dbReference type="PRINTS" id="PR00290">
    <property type="entry name" value="KAZALINHBTR"/>
</dbReference>
<dbReference type="SMART" id="SM00280">
    <property type="entry name" value="KAZAL"/>
    <property type="match status" value="1"/>
</dbReference>
<dbReference type="SUPFAM" id="SSF100895">
    <property type="entry name" value="Kazal-type serine protease inhibitors"/>
    <property type="match status" value="1"/>
</dbReference>
<dbReference type="PROSITE" id="PS00282">
    <property type="entry name" value="KAZAL_1"/>
    <property type="match status" value="1"/>
</dbReference>
<dbReference type="PROSITE" id="PS51465">
    <property type="entry name" value="KAZAL_2"/>
    <property type="match status" value="1"/>
</dbReference>